<feature type="chain" id="PRO_1000191889" description="Argininosuccinate synthase">
    <location>
        <begin position="1"/>
        <end position="397"/>
    </location>
</feature>
<feature type="binding site" evidence="1">
    <location>
        <begin position="8"/>
        <end position="16"/>
    </location>
    <ligand>
        <name>ATP</name>
        <dbReference type="ChEBI" id="CHEBI:30616"/>
    </ligand>
</feature>
<feature type="binding site" evidence="1">
    <location>
        <position position="86"/>
    </location>
    <ligand>
        <name>L-citrulline</name>
        <dbReference type="ChEBI" id="CHEBI:57743"/>
    </ligand>
</feature>
<feature type="binding site" evidence="1">
    <location>
        <position position="91"/>
    </location>
    <ligand>
        <name>L-citrulline</name>
        <dbReference type="ChEBI" id="CHEBI:57743"/>
    </ligand>
</feature>
<feature type="binding site" evidence="1">
    <location>
        <position position="116"/>
    </location>
    <ligand>
        <name>ATP</name>
        <dbReference type="ChEBI" id="CHEBI:30616"/>
    </ligand>
</feature>
<feature type="binding site" evidence="1">
    <location>
        <position position="118"/>
    </location>
    <ligand>
        <name>L-aspartate</name>
        <dbReference type="ChEBI" id="CHEBI:29991"/>
    </ligand>
</feature>
<feature type="binding site" evidence="1">
    <location>
        <position position="122"/>
    </location>
    <ligand>
        <name>L-aspartate</name>
        <dbReference type="ChEBI" id="CHEBI:29991"/>
    </ligand>
</feature>
<feature type="binding site" evidence="1">
    <location>
        <position position="122"/>
    </location>
    <ligand>
        <name>L-citrulline</name>
        <dbReference type="ChEBI" id="CHEBI:57743"/>
    </ligand>
</feature>
<feature type="binding site" evidence="1">
    <location>
        <position position="123"/>
    </location>
    <ligand>
        <name>L-aspartate</name>
        <dbReference type="ChEBI" id="CHEBI:29991"/>
    </ligand>
</feature>
<feature type="binding site" evidence="1">
    <location>
        <position position="126"/>
    </location>
    <ligand>
        <name>L-citrulline</name>
        <dbReference type="ChEBI" id="CHEBI:57743"/>
    </ligand>
</feature>
<feature type="binding site" evidence="1">
    <location>
        <position position="175"/>
    </location>
    <ligand>
        <name>L-citrulline</name>
        <dbReference type="ChEBI" id="CHEBI:57743"/>
    </ligand>
</feature>
<feature type="binding site" evidence="1">
    <location>
        <position position="184"/>
    </location>
    <ligand>
        <name>L-citrulline</name>
        <dbReference type="ChEBI" id="CHEBI:57743"/>
    </ligand>
</feature>
<feature type="binding site" evidence="1">
    <location>
        <position position="260"/>
    </location>
    <ligand>
        <name>L-citrulline</name>
        <dbReference type="ChEBI" id="CHEBI:57743"/>
    </ligand>
</feature>
<feature type="binding site" evidence="1">
    <location>
        <position position="272"/>
    </location>
    <ligand>
        <name>L-citrulline</name>
        <dbReference type="ChEBI" id="CHEBI:57743"/>
    </ligand>
</feature>
<organism>
    <name type="scientific">Clostridium botulinum (strain Kyoto / Type A2)</name>
    <dbReference type="NCBI Taxonomy" id="536232"/>
    <lineage>
        <taxon>Bacteria</taxon>
        <taxon>Bacillati</taxon>
        <taxon>Bacillota</taxon>
        <taxon>Clostridia</taxon>
        <taxon>Eubacteriales</taxon>
        <taxon>Clostridiaceae</taxon>
        <taxon>Clostridium</taxon>
    </lineage>
</organism>
<name>ASSY_CLOBJ</name>
<evidence type="ECO:0000255" key="1">
    <source>
        <dbReference type="HAMAP-Rule" id="MF_00005"/>
    </source>
</evidence>
<comment type="catalytic activity">
    <reaction evidence="1">
        <text>L-citrulline + L-aspartate + ATP = 2-(N(omega)-L-arginino)succinate + AMP + diphosphate + H(+)</text>
        <dbReference type="Rhea" id="RHEA:10932"/>
        <dbReference type="ChEBI" id="CHEBI:15378"/>
        <dbReference type="ChEBI" id="CHEBI:29991"/>
        <dbReference type="ChEBI" id="CHEBI:30616"/>
        <dbReference type="ChEBI" id="CHEBI:33019"/>
        <dbReference type="ChEBI" id="CHEBI:57472"/>
        <dbReference type="ChEBI" id="CHEBI:57743"/>
        <dbReference type="ChEBI" id="CHEBI:456215"/>
        <dbReference type="EC" id="6.3.4.5"/>
    </reaction>
</comment>
<comment type="pathway">
    <text evidence="1">Amino-acid biosynthesis; L-arginine biosynthesis; L-arginine from L-ornithine and carbamoyl phosphate: step 2/3.</text>
</comment>
<comment type="subunit">
    <text evidence="1">Homotetramer.</text>
</comment>
<comment type="subcellular location">
    <subcellularLocation>
        <location evidence="1">Cytoplasm</location>
    </subcellularLocation>
</comment>
<comment type="similarity">
    <text evidence="1">Belongs to the argininosuccinate synthase family. Type 1 subfamily.</text>
</comment>
<keyword id="KW-0028">Amino-acid biosynthesis</keyword>
<keyword id="KW-0055">Arginine biosynthesis</keyword>
<keyword id="KW-0067">ATP-binding</keyword>
<keyword id="KW-0963">Cytoplasm</keyword>
<keyword id="KW-0436">Ligase</keyword>
<keyword id="KW-0547">Nucleotide-binding</keyword>
<proteinExistence type="inferred from homology"/>
<dbReference type="EC" id="6.3.4.5" evidence="1"/>
<dbReference type="EMBL" id="CP001581">
    <property type="protein sequence ID" value="ACO86433.1"/>
    <property type="molecule type" value="Genomic_DNA"/>
</dbReference>
<dbReference type="RefSeq" id="WP_012705317.1">
    <property type="nucleotide sequence ID" value="NC_012563.1"/>
</dbReference>
<dbReference type="SMR" id="C1FU68"/>
<dbReference type="KEGG" id="cby:CLM_3035"/>
<dbReference type="eggNOG" id="COG0137">
    <property type="taxonomic scope" value="Bacteria"/>
</dbReference>
<dbReference type="HOGENOM" id="CLU_032784_4_2_9"/>
<dbReference type="UniPathway" id="UPA00068">
    <property type="reaction ID" value="UER00113"/>
</dbReference>
<dbReference type="Proteomes" id="UP000001374">
    <property type="component" value="Chromosome"/>
</dbReference>
<dbReference type="GO" id="GO:0005737">
    <property type="term" value="C:cytoplasm"/>
    <property type="evidence" value="ECO:0007669"/>
    <property type="project" value="UniProtKB-SubCell"/>
</dbReference>
<dbReference type="GO" id="GO:0004055">
    <property type="term" value="F:argininosuccinate synthase activity"/>
    <property type="evidence" value="ECO:0007669"/>
    <property type="project" value="UniProtKB-UniRule"/>
</dbReference>
<dbReference type="GO" id="GO:0005524">
    <property type="term" value="F:ATP binding"/>
    <property type="evidence" value="ECO:0007669"/>
    <property type="project" value="UniProtKB-UniRule"/>
</dbReference>
<dbReference type="GO" id="GO:0000053">
    <property type="term" value="P:argininosuccinate metabolic process"/>
    <property type="evidence" value="ECO:0007669"/>
    <property type="project" value="TreeGrafter"/>
</dbReference>
<dbReference type="GO" id="GO:0006526">
    <property type="term" value="P:L-arginine biosynthetic process"/>
    <property type="evidence" value="ECO:0007669"/>
    <property type="project" value="UniProtKB-UniRule"/>
</dbReference>
<dbReference type="GO" id="GO:0000050">
    <property type="term" value="P:urea cycle"/>
    <property type="evidence" value="ECO:0007669"/>
    <property type="project" value="TreeGrafter"/>
</dbReference>
<dbReference type="CDD" id="cd01999">
    <property type="entry name" value="ASS"/>
    <property type="match status" value="1"/>
</dbReference>
<dbReference type="FunFam" id="3.40.50.620:FF:000019">
    <property type="entry name" value="Argininosuccinate synthase"/>
    <property type="match status" value="1"/>
</dbReference>
<dbReference type="FunFam" id="3.90.1260.10:FF:000007">
    <property type="entry name" value="Argininosuccinate synthase"/>
    <property type="match status" value="1"/>
</dbReference>
<dbReference type="Gene3D" id="3.90.1260.10">
    <property type="entry name" value="Argininosuccinate synthetase, chain A, domain 2"/>
    <property type="match status" value="1"/>
</dbReference>
<dbReference type="Gene3D" id="3.40.50.620">
    <property type="entry name" value="HUPs"/>
    <property type="match status" value="1"/>
</dbReference>
<dbReference type="Gene3D" id="1.20.5.470">
    <property type="entry name" value="Single helix bin"/>
    <property type="match status" value="1"/>
</dbReference>
<dbReference type="HAMAP" id="MF_00005">
    <property type="entry name" value="Arg_succ_synth_type1"/>
    <property type="match status" value="1"/>
</dbReference>
<dbReference type="InterPro" id="IPR048268">
    <property type="entry name" value="Arginosuc_syn_C"/>
</dbReference>
<dbReference type="InterPro" id="IPR048267">
    <property type="entry name" value="Arginosuc_syn_N"/>
</dbReference>
<dbReference type="InterPro" id="IPR001518">
    <property type="entry name" value="Arginosuc_synth"/>
</dbReference>
<dbReference type="InterPro" id="IPR018223">
    <property type="entry name" value="Arginosuc_synth_CS"/>
</dbReference>
<dbReference type="InterPro" id="IPR023434">
    <property type="entry name" value="Arginosuc_synth_type_1_subfam"/>
</dbReference>
<dbReference type="InterPro" id="IPR024074">
    <property type="entry name" value="AS_cat/multimer_dom_body"/>
</dbReference>
<dbReference type="InterPro" id="IPR014729">
    <property type="entry name" value="Rossmann-like_a/b/a_fold"/>
</dbReference>
<dbReference type="NCBIfam" id="TIGR00032">
    <property type="entry name" value="argG"/>
    <property type="match status" value="1"/>
</dbReference>
<dbReference type="NCBIfam" id="NF001770">
    <property type="entry name" value="PRK00509.1"/>
    <property type="match status" value="1"/>
</dbReference>
<dbReference type="PANTHER" id="PTHR11587">
    <property type="entry name" value="ARGININOSUCCINATE SYNTHASE"/>
    <property type="match status" value="1"/>
</dbReference>
<dbReference type="PANTHER" id="PTHR11587:SF2">
    <property type="entry name" value="ARGININOSUCCINATE SYNTHASE"/>
    <property type="match status" value="1"/>
</dbReference>
<dbReference type="Pfam" id="PF20979">
    <property type="entry name" value="Arginosuc_syn_C"/>
    <property type="match status" value="1"/>
</dbReference>
<dbReference type="Pfam" id="PF00764">
    <property type="entry name" value="Arginosuc_synth"/>
    <property type="match status" value="1"/>
</dbReference>
<dbReference type="SUPFAM" id="SSF52402">
    <property type="entry name" value="Adenine nucleotide alpha hydrolases-like"/>
    <property type="match status" value="1"/>
</dbReference>
<dbReference type="SUPFAM" id="SSF69864">
    <property type="entry name" value="Argininosuccinate synthetase, C-terminal domain"/>
    <property type="match status" value="1"/>
</dbReference>
<dbReference type="PROSITE" id="PS00564">
    <property type="entry name" value="ARGININOSUCCIN_SYN_1"/>
    <property type="match status" value="1"/>
</dbReference>
<dbReference type="PROSITE" id="PS00565">
    <property type="entry name" value="ARGININOSUCCIN_SYN_2"/>
    <property type="match status" value="1"/>
</dbReference>
<protein>
    <recommendedName>
        <fullName evidence="1">Argininosuccinate synthase</fullName>
        <ecNumber evidence="1">6.3.4.5</ecNumber>
    </recommendedName>
    <alternativeName>
        <fullName evidence="1">Citrulline--aspartate ligase</fullName>
    </alternativeName>
</protein>
<accession>C1FU68</accession>
<gene>
    <name evidence="1" type="primary">argG</name>
    <name type="ordered locus">CLM_3035</name>
</gene>
<reference key="1">
    <citation type="submission" date="2008-10" db="EMBL/GenBank/DDBJ databases">
        <title>Genome sequence of Clostridium botulinum A2 Kyoto.</title>
        <authorList>
            <person name="Shrivastava S."/>
            <person name="Brinkac L.M."/>
            <person name="Brown J.L."/>
            <person name="Bruce D."/>
            <person name="Detter C.C."/>
            <person name="Johnson E.A."/>
            <person name="Munk C.A."/>
            <person name="Smith L.A."/>
            <person name="Smith T.J."/>
            <person name="Sutton G."/>
            <person name="Brettin T.S."/>
        </authorList>
    </citation>
    <scope>NUCLEOTIDE SEQUENCE [LARGE SCALE GENOMIC DNA]</scope>
    <source>
        <strain>Kyoto / Type A2</strain>
    </source>
</reference>
<sequence length="397" mass="44742">MKEKVVLAYSGGLDTSIIIPWLKENYDLDVIAVCVNVGQGDDMDYVKTKAIKSGASKIYVEDVKEEFVVDYLYKAIKSEALYEQDYMLGTSFARPLMAKKLVEIAHKEQAKYICHGCTGKGNDQVRFEVGVKAQDPIIKIIAPWRIWDIKSREDAIDYAKKVGVEVPVTKKKIYSVDKNLWHVSHEGGDLEDLKNEHKEDMYFMVTPPEKAKNEPTYLEIYFEKGAPVKINGEVLNPVDIIDKLNTIGGENGIGIADIIENRLVGMKSRGIYETPAGTLLYAAHKKLESVTLDKYTYQYKKIVSAQYGELVYNGLWFTSLREAIDAFVDKTQENVTGTVQLKLYKGNIKPCSVDTEYALYDEGISSFGESELYSHKDAEGFINLFGLPSKIKALKNF</sequence>